<keyword id="KW-0165">Cleavage on pair of basic residues</keyword>
<keyword id="KW-0257">Endorphin</keyword>
<keyword id="KW-0372">Hormone</keyword>
<keyword id="KW-1185">Reference proteome</keyword>
<keyword id="KW-0964">Secreted</keyword>
<keyword id="KW-0732">Signal</keyword>
<gene>
    <name type="primary">pomca</name>
</gene>
<feature type="signal peptide" evidence="2">
    <location>
        <begin position="1"/>
        <end position="28"/>
    </location>
</feature>
<feature type="propeptide" id="PRO_0000025057">
    <location>
        <begin position="29"/>
        <end position="105"/>
    </location>
</feature>
<feature type="peptide" id="PRO_0000025058" description="Corticotropin">
    <location>
        <begin position="108"/>
        <end position="146"/>
    </location>
</feature>
<feature type="peptide" id="PRO_0000025059" description="Melanocyte-stimulating hormone alpha">
    <location>
        <begin position="108"/>
        <end position="122"/>
    </location>
</feature>
<feature type="peptide" id="PRO_0000025060" description="Corticotropin-like intermediary peptide">
    <location>
        <begin position="126"/>
        <end position="146"/>
    </location>
</feature>
<feature type="peptide" id="PRO_0000025061" description="Lipotropin beta">
    <location>
        <begin position="149"/>
        <end position="222"/>
    </location>
</feature>
<feature type="peptide" id="PRO_0000025062" description="Lipotropin gamma">
    <location>
        <begin position="149"/>
        <end position="187"/>
    </location>
</feature>
<feature type="peptide" id="PRO_0000025063" description="Melanocyte-stimulating hormone beta">
    <location>
        <begin position="171"/>
        <end position="187"/>
    </location>
</feature>
<feature type="peptide" id="PRO_0000025064" description="Beta-endorphin">
    <location>
        <begin position="190"/>
        <end position="222"/>
    </location>
</feature>
<feature type="peptide" id="PRO_0000025065" description="Met-enkephalin">
    <location>
        <begin position="190"/>
        <end position="194"/>
    </location>
</feature>
<evidence type="ECO:0000250" key="1">
    <source>
        <dbReference type="UniProtKB" id="P01193"/>
    </source>
</evidence>
<evidence type="ECO:0000255" key="2"/>
<evidence type="ECO:0000305" key="3"/>
<reference key="1">
    <citation type="journal article" date="1998" name="Mol. Cell. Endocrinol.">
        <title>Cloning and expression of two proopiomelanocortin mRNAs in the common carp (Cyprinus carpio L.).</title>
        <authorList>
            <person name="Arends R.J."/>
            <person name="Vermeer H."/>
            <person name="Martens G.J.M."/>
            <person name="Leunissen J.A.M."/>
            <person name="Wendelaar Bonga S.E."/>
            <person name="Flik G."/>
        </authorList>
    </citation>
    <scope>NUCLEOTIDE SEQUENCE [MRNA]</scope>
    <source>
        <tissue>Pituitary</tissue>
    </source>
</reference>
<dbReference type="EMBL" id="Y14618">
    <property type="protein sequence ID" value="CAA74968.1"/>
    <property type="molecule type" value="mRNA"/>
</dbReference>
<dbReference type="SMR" id="Q9YGK4"/>
<dbReference type="Proteomes" id="UP000694384">
    <property type="component" value="Unplaced"/>
</dbReference>
<dbReference type="Proteomes" id="UP000694427">
    <property type="component" value="Unplaced"/>
</dbReference>
<dbReference type="Proteomes" id="UP000694700">
    <property type="component" value="Unplaced"/>
</dbReference>
<dbReference type="Proteomes" id="UP000694701">
    <property type="component" value="Unplaced"/>
</dbReference>
<dbReference type="Proteomes" id="UP001155660">
    <property type="component" value="Unplaced"/>
</dbReference>
<dbReference type="GO" id="GO:0005576">
    <property type="term" value="C:extracellular region"/>
    <property type="evidence" value="ECO:0007669"/>
    <property type="project" value="UniProtKB-SubCell"/>
</dbReference>
<dbReference type="GO" id="GO:0005184">
    <property type="term" value="F:neuropeptide hormone activity"/>
    <property type="evidence" value="ECO:0007669"/>
    <property type="project" value="TreeGrafter"/>
</dbReference>
<dbReference type="GO" id="GO:0007218">
    <property type="term" value="P:neuropeptide signaling pathway"/>
    <property type="evidence" value="ECO:0007669"/>
    <property type="project" value="UniProtKB-KW"/>
</dbReference>
<dbReference type="InterPro" id="IPR013531">
    <property type="entry name" value="Mcrtin_ACTH_cent"/>
</dbReference>
<dbReference type="InterPro" id="IPR013593">
    <property type="entry name" value="Melanocortin_N"/>
</dbReference>
<dbReference type="InterPro" id="IPR013532">
    <property type="entry name" value="Opioid_neuropept"/>
</dbReference>
<dbReference type="InterPro" id="IPR001941">
    <property type="entry name" value="PMOC"/>
</dbReference>
<dbReference type="InterPro" id="IPR050878">
    <property type="entry name" value="POMC-derived_peptides"/>
</dbReference>
<dbReference type="PANTHER" id="PTHR11416">
    <property type="entry name" value="PRO-OPIOMELANOCORTIN"/>
    <property type="match status" value="1"/>
</dbReference>
<dbReference type="PANTHER" id="PTHR11416:SF7">
    <property type="entry name" value="PRO-OPIOMELANOCORTIN"/>
    <property type="match status" value="1"/>
</dbReference>
<dbReference type="Pfam" id="PF00976">
    <property type="entry name" value="ACTH_domain"/>
    <property type="match status" value="2"/>
</dbReference>
<dbReference type="Pfam" id="PF08384">
    <property type="entry name" value="NPP"/>
    <property type="match status" value="1"/>
</dbReference>
<dbReference type="Pfam" id="PF08035">
    <property type="entry name" value="Op_neuropeptide"/>
    <property type="match status" value="1"/>
</dbReference>
<dbReference type="PRINTS" id="PR00383">
    <property type="entry name" value="MELANOCORTIN"/>
</dbReference>
<dbReference type="SMART" id="SM01363">
    <property type="entry name" value="ACTH_domain"/>
    <property type="match status" value="2"/>
</dbReference>
<dbReference type="SMART" id="SM01364">
    <property type="entry name" value="NPP"/>
    <property type="match status" value="1"/>
</dbReference>
<dbReference type="SMART" id="SM01365">
    <property type="entry name" value="Op_neuropeptide"/>
    <property type="match status" value="1"/>
</dbReference>
<proteinExistence type="evidence at transcript level"/>
<organism>
    <name type="scientific">Cyprinus carpio</name>
    <name type="common">Common carp</name>
    <dbReference type="NCBI Taxonomy" id="7962"/>
    <lineage>
        <taxon>Eukaryota</taxon>
        <taxon>Metazoa</taxon>
        <taxon>Chordata</taxon>
        <taxon>Craniata</taxon>
        <taxon>Vertebrata</taxon>
        <taxon>Euteleostomi</taxon>
        <taxon>Actinopterygii</taxon>
        <taxon>Neopterygii</taxon>
        <taxon>Teleostei</taxon>
        <taxon>Ostariophysi</taxon>
        <taxon>Cypriniformes</taxon>
        <taxon>Cyprinidae</taxon>
        <taxon>Cyprininae</taxon>
        <taxon>Cyprinus</taxon>
    </lineage>
</organism>
<protein>
    <recommendedName>
        <fullName>Pro-opiomelanocortin-1</fullName>
        <shortName>POMC-1</shortName>
    </recommendedName>
    <alternativeName>
        <fullName>Corticotropin-lipotropin 1</fullName>
    </alternativeName>
    <alternativeName>
        <fullName>Corticotropin-lipotropin I</fullName>
    </alternativeName>
    <alternativeName>
        <fullName>Pro-opiomelanocortin I</fullName>
        <shortName>POMC I</shortName>
    </alternativeName>
    <component>
        <recommendedName>
            <fullName>Corticotropin</fullName>
        </recommendedName>
        <alternativeName>
            <fullName>Adrenocorticotropic hormone</fullName>
            <shortName>ACTH</shortName>
        </alternativeName>
    </component>
    <component>
        <recommendedName>
            <fullName>Melanocyte-stimulating hormone alpha</fullName>
            <shortName>Alpha-MSH</shortName>
        </recommendedName>
        <alternativeName>
            <fullName>Melanotropin alpha</fullName>
        </alternativeName>
    </component>
    <component>
        <recommendedName>
            <fullName>Corticotropin-like intermediary peptide</fullName>
            <shortName>CLIP</shortName>
        </recommendedName>
    </component>
    <component>
        <recommendedName>
            <fullName>Lipotropin beta</fullName>
        </recommendedName>
        <alternativeName>
            <fullName>Beta-LPH</fullName>
        </alternativeName>
    </component>
    <component>
        <recommendedName>
            <fullName>Lipotropin gamma</fullName>
        </recommendedName>
        <alternativeName>
            <fullName>Gamma-LPH</fullName>
        </alternativeName>
    </component>
    <component>
        <recommendedName>
            <fullName>Melanocyte-stimulating hormone beta</fullName>
            <shortName>Beta-MSH</shortName>
        </recommendedName>
        <alternativeName>
            <fullName>Melanotropin beta</fullName>
        </alternativeName>
    </component>
    <component>
        <recommendedName>
            <fullName>Beta-endorphin</fullName>
        </recommendedName>
    </component>
    <component>
        <recommendedName>
            <fullName>Met-enkephalin</fullName>
        </recommendedName>
    </component>
</protein>
<accession>Q9YGK4</accession>
<comment type="function">
    <molecule>Corticotropin</molecule>
    <text>Stimulates the adrenal glands to release cortisol.</text>
</comment>
<comment type="function">
    <molecule>Melanocyte-stimulating hormone alpha</molecule>
    <text>Anorexigenic peptide. Increases the pigmentation of skin by increasing melanin production in melanocytes.</text>
</comment>
<comment type="function">
    <molecule>Melanocyte-stimulating hormone beta</molecule>
    <text>Increases the pigmentation of skin by increasing melanin production in melanocytes.</text>
</comment>
<comment type="function">
    <molecule>Beta-endorphin</molecule>
    <text>Endogenous orexigenic opiate.</text>
</comment>
<comment type="function">
    <molecule>Met-enkephalin</molecule>
    <text>Endogenous opiate.</text>
</comment>
<comment type="subcellular location">
    <subcellularLocation>
        <location evidence="1">Secreted</location>
    </subcellularLocation>
    <text evidence="1">Melanocyte-stimulating hormone alpha and beta-endorphin are stored in separate granules in hypothalamic POMC neurons, suggesting that secretion may be under the control of different regulatory mechanisms.</text>
</comment>
<comment type="PTM">
    <text>Specific enzymatic cleavages at paired basic residues yield the different active peptides.</text>
</comment>
<comment type="similarity">
    <text evidence="3">Belongs to the POMC family.</text>
</comment>
<name>COLI1_CYPCA</name>
<sequence>MVRGERMLCPAWLLALAVLCAAGSEVRAQCMEDARCRDLTTDENILDCIQLCRSDLTDETPVYPGESHLQPPSELEQTEVLVPLSPAALAPAEQMDPESSPQHEHKRSYSMEHFRWGKPVGRKRRPIKVYTNGVEEESTETLPAEMRRELATNEIDYPQEEGALNQQDKKDGSYKMSHFRWSSPPASKRYGGFMKSWDERSQKPLLTLFKNVINKEHQKKDQ</sequence>